<gene>
    <name evidence="5" type="primary">GRIA4</name>
    <name type="synonym">GLUR4</name>
</gene>
<evidence type="ECO:0000250" key="1"/>
<evidence type="ECO:0000250" key="2">
    <source>
        <dbReference type="UniProtKB" id="P19493"/>
    </source>
</evidence>
<evidence type="ECO:0000250" key="3">
    <source>
        <dbReference type="UniProtKB" id="P23819"/>
    </source>
</evidence>
<evidence type="ECO:0000250" key="4">
    <source>
        <dbReference type="UniProtKB" id="P42262"/>
    </source>
</evidence>
<evidence type="ECO:0000250" key="5">
    <source>
        <dbReference type="UniProtKB" id="P48058"/>
    </source>
</evidence>
<evidence type="ECO:0000250" key="6">
    <source>
        <dbReference type="UniProtKB" id="Q9Z2W8"/>
    </source>
</evidence>
<evidence type="ECO:0000255" key="7"/>
<evidence type="ECO:0000305" key="8"/>
<dbReference type="EMBL" id="DQ159932">
    <property type="protein sequence ID" value="ABA47256.1"/>
    <property type="molecule type" value="mRNA"/>
</dbReference>
<dbReference type="RefSeq" id="NP_001306367.1">
    <property type="nucleotide sequence ID" value="NM_001319438.1"/>
</dbReference>
<dbReference type="SMR" id="Q38PU5"/>
<dbReference type="STRING" id="9541.ENSMFAP00000004542"/>
<dbReference type="GlyCosmos" id="Q38PU5">
    <property type="glycosylation" value="6 sites, No reported glycans"/>
</dbReference>
<dbReference type="eggNOG" id="KOG1054">
    <property type="taxonomic scope" value="Eukaryota"/>
</dbReference>
<dbReference type="Proteomes" id="UP000233100">
    <property type="component" value="Unplaced"/>
</dbReference>
<dbReference type="GO" id="GO:0032281">
    <property type="term" value="C:AMPA glutamate receptor complex"/>
    <property type="evidence" value="ECO:0000250"/>
    <property type="project" value="UniProtKB"/>
</dbReference>
<dbReference type="GO" id="GO:0030425">
    <property type="term" value="C:dendrite"/>
    <property type="evidence" value="ECO:0000250"/>
    <property type="project" value="UniProtKB"/>
</dbReference>
<dbReference type="GO" id="GO:0032983">
    <property type="term" value="C:kainate selective glutamate receptor complex"/>
    <property type="evidence" value="ECO:0000250"/>
    <property type="project" value="UniProtKB"/>
</dbReference>
<dbReference type="GO" id="GO:0005886">
    <property type="term" value="C:plasma membrane"/>
    <property type="evidence" value="ECO:0000250"/>
    <property type="project" value="UniProtKB"/>
</dbReference>
<dbReference type="GO" id="GO:0045211">
    <property type="term" value="C:postsynaptic membrane"/>
    <property type="evidence" value="ECO:0007669"/>
    <property type="project" value="UniProtKB-SubCell"/>
</dbReference>
<dbReference type="GO" id="GO:0004971">
    <property type="term" value="F:AMPA glutamate receptor activity"/>
    <property type="evidence" value="ECO:0000250"/>
    <property type="project" value="UniProtKB"/>
</dbReference>
<dbReference type="GO" id="GO:0004970">
    <property type="term" value="F:glutamate-gated receptor activity"/>
    <property type="evidence" value="ECO:0000250"/>
    <property type="project" value="UniProtKB"/>
</dbReference>
<dbReference type="CDD" id="cd06388">
    <property type="entry name" value="PBP1_iGluR_AMPA_GluR4"/>
    <property type="match status" value="1"/>
</dbReference>
<dbReference type="CDD" id="cd13727">
    <property type="entry name" value="PBP2_iGluR_AMPA_GluR4"/>
    <property type="match status" value="1"/>
</dbReference>
<dbReference type="FunFam" id="1.10.287.70:FF:000067">
    <property type="entry name" value="glutamate receptor 2 isoform X1"/>
    <property type="match status" value="1"/>
</dbReference>
<dbReference type="FunFam" id="1.10.287.70:FF:000099">
    <property type="entry name" value="glutamate receptor 2 isoform X1"/>
    <property type="match status" value="1"/>
</dbReference>
<dbReference type="FunFam" id="3.40.190.10:FF:000001">
    <property type="entry name" value="Glutamate receptor ionotropic, kainate 2"/>
    <property type="match status" value="1"/>
</dbReference>
<dbReference type="FunFam" id="3.40.50.2300:FF:000004">
    <property type="entry name" value="Glutamate receptor, ionotropic, AMPA 2"/>
    <property type="match status" value="1"/>
</dbReference>
<dbReference type="FunFam" id="3.40.190.10:FF:000666">
    <property type="entry name" value="Glutamate receptor, ionotropic, AMPA 2a"/>
    <property type="match status" value="1"/>
</dbReference>
<dbReference type="Gene3D" id="1.10.287.70">
    <property type="match status" value="2"/>
</dbReference>
<dbReference type="Gene3D" id="3.40.50.2300">
    <property type="match status" value="2"/>
</dbReference>
<dbReference type="Gene3D" id="3.40.190.10">
    <property type="entry name" value="Periplasmic binding protein-like II"/>
    <property type="match status" value="2"/>
</dbReference>
<dbReference type="InterPro" id="IPR001828">
    <property type="entry name" value="ANF_lig-bd_rcpt"/>
</dbReference>
<dbReference type="InterPro" id="IPR019594">
    <property type="entry name" value="Glu/Gly-bd"/>
</dbReference>
<dbReference type="InterPro" id="IPR001508">
    <property type="entry name" value="Iono_Glu_rcpt_met"/>
</dbReference>
<dbReference type="InterPro" id="IPR015683">
    <property type="entry name" value="Ionotropic_Glu_rcpt"/>
</dbReference>
<dbReference type="InterPro" id="IPR001320">
    <property type="entry name" value="Iontro_rcpt_C"/>
</dbReference>
<dbReference type="InterPro" id="IPR028082">
    <property type="entry name" value="Peripla_BP_I"/>
</dbReference>
<dbReference type="PANTHER" id="PTHR18966">
    <property type="entry name" value="IONOTROPIC GLUTAMATE RECEPTOR"/>
    <property type="match status" value="1"/>
</dbReference>
<dbReference type="Pfam" id="PF01094">
    <property type="entry name" value="ANF_receptor"/>
    <property type="match status" value="1"/>
</dbReference>
<dbReference type="Pfam" id="PF00060">
    <property type="entry name" value="Lig_chan"/>
    <property type="match status" value="1"/>
</dbReference>
<dbReference type="Pfam" id="PF10613">
    <property type="entry name" value="Lig_chan-Glu_bd"/>
    <property type="match status" value="1"/>
</dbReference>
<dbReference type="PRINTS" id="PR00177">
    <property type="entry name" value="NMDARECEPTOR"/>
</dbReference>
<dbReference type="SMART" id="SM00918">
    <property type="entry name" value="Lig_chan-Glu_bd"/>
    <property type="match status" value="1"/>
</dbReference>
<dbReference type="SMART" id="SM00079">
    <property type="entry name" value="PBPe"/>
    <property type="match status" value="1"/>
</dbReference>
<dbReference type="SUPFAM" id="SSF53822">
    <property type="entry name" value="Periplasmic binding protein-like I"/>
    <property type="match status" value="1"/>
</dbReference>
<dbReference type="SUPFAM" id="SSF53850">
    <property type="entry name" value="Periplasmic binding protein-like II"/>
    <property type="match status" value="1"/>
</dbReference>
<dbReference type="SUPFAM" id="SSF81324">
    <property type="entry name" value="Voltage-gated potassium channels"/>
    <property type="match status" value="1"/>
</dbReference>
<keyword id="KW-1003">Cell membrane</keyword>
<keyword id="KW-0966">Cell projection</keyword>
<keyword id="KW-1015">Disulfide bond</keyword>
<keyword id="KW-0325">Glycoprotein</keyword>
<keyword id="KW-0407">Ion channel</keyword>
<keyword id="KW-0406">Ion transport</keyword>
<keyword id="KW-1071">Ligand-gated ion channel</keyword>
<keyword id="KW-0449">Lipoprotein</keyword>
<keyword id="KW-0472">Membrane</keyword>
<keyword id="KW-0564">Palmitate</keyword>
<keyword id="KW-0597">Phosphoprotein</keyword>
<keyword id="KW-0628">Postsynaptic cell membrane</keyword>
<keyword id="KW-0675">Receptor</keyword>
<keyword id="KW-1185">Reference proteome</keyword>
<keyword id="KW-0732">Signal</keyword>
<keyword id="KW-0770">Synapse</keyword>
<keyword id="KW-0812">Transmembrane</keyword>
<keyword id="KW-1133">Transmembrane helix</keyword>
<keyword id="KW-0813">Transport</keyword>
<feature type="signal peptide" evidence="7">
    <location>
        <begin position="1"/>
        <end position="20"/>
    </location>
</feature>
<feature type="chain" id="PRO_0000271755" description="Glutamate receptor 4">
    <location>
        <begin position="21"/>
        <end position="902"/>
    </location>
</feature>
<feature type="topological domain" description="Extracellular" evidence="1">
    <location>
        <begin position="22"/>
        <end position="544"/>
    </location>
</feature>
<feature type="transmembrane region" description="Helical" evidence="1">
    <location>
        <begin position="545"/>
        <end position="565"/>
    </location>
</feature>
<feature type="topological domain" description="Cytoplasmic" evidence="1">
    <location>
        <begin position="566"/>
        <end position="592"/>
    </location>
</feature>
<feature type="intramembrane region" description="Helical; Pore-forming" evidence="1">
    <location>
        <begin position="593"/>
        <end position="608"/>
    </location>
</feature>
<feature type="intramembrane region" evidence="1">
    <location>
        <begin position="609"/>
        <end position="611"/>
    </location>
</feature>
<feature type="topological domain" description="Cytoplasmic" evidence="1">
    <location>
        <begin position="612"/>
        <end position="617"/>
    </location>
</feature>
<feature type="transmembrane region" description="Helical" evidence="1">
    <location>
        <begin position="618"/>
        <end position="638"/>
    </location>
</feature>
<feature type="topological domain" description="Extracellular" evidence="1">
    <location>
        <begin position="639"/>
        <end position="813"/>
    </location>
</feature>
<feature type="transmembrane region" description="Helical; Name=M4" evidence="1">
    <location>
        <begin position="814"/>
        <end position="834"/>
    </location>
</feature>
<feature type="topological domain" description="Cytoplasmic" evidence="1">
    <location>
        <begin position="835"/>
        <end position="902"/>
    </location>
</feature>
<feature type="binding site" evidence="2">
    <location>
        <position position="500"/>
    </location>
    <ligand>
        <name>L-glutamate</name>
        <dbReference type="ChEBI" id="CHEBI:29985"/>
    </ligand>
</feature>
<feature type="binding site" evidence="2">
    <location>
        <position position="502"/>
    </location>
    <ligand>
        <name>L-glutamate</name>
        <dbReference type="ChEBI" id="CHEBI:29985"/>
    </ligand>
</feature>
<feature type="binding site" evidence="2">
    <location>
        <position position="507"/>
    </location>
    <ligand>
        <name>L-glutamate</name>
        <dbReference type="ChEBI" id="CHEBI:29985"/>
    </ligand>
</feature>
<feature type="binding site" evidence="2">
    <location>
        <position position="676"/>
    </location>
    <ligand>
        <name>L-glutamate</name>
        <dbReference type="ChEBI" id="CHEBI:29985"/>
    </ligand>
</feature>
<feature type="binding site" evidence="2">
    <location>
        <position position="677"/>
    </location>
    <ligand>
        <name>L-glutamate</name>
        <dbReference type="ChEBI" id="CHEBI:29985"/>
    </ligand>
</feature>
<feature type="binding site" evidence="2">
    <location>
        <position position="727"/>
    </location>
    <ligand>
        <name>L-glutamate</name>
        <dbReference type="ChEBI" id="CHEBI:29985"/>
    </ligand>
</feature>
<feature type="modified residue" description="Phosphoserine; by PKC/PRKCG" evidence="2">
    <location>
        <position position="862"/>
    </location>
</feature>
<feature type="lipid moiety-binding region" description="S-palmitoyl cysteine" evidence="4">
    <location>
        <position position="611"/>
    </location>
</feature>
<feature type="lipid moiety-binding region" description="S-palmitoyl cysteine" evidence="4">
    <location>
        <position position="837"/>
    </location>
</feature>
<feature type="glycosylation site" description="N-linked (GlcNAc...) asparagine" evidence="7">
    <location>
        <position position="52"/>
    </location>
</feature>
<feature type="glycosylation site" description="N-linked (GlcNAc...) asparagine" evidence="7">
    <location>
        <position position="56"/>
    </location>
</feature>
<feature type="glycosylation site" description="N-linked (GlcNAc...) asparagine" evidence="7">
    <location>
        <position position="258"/>
    </location>
</feature>
<feature type="glycosylation site" description="N-linked (GlcNAc...) asparagine" evidence="7">
    <location>
        <position position="371"/>
    </location>
</feature>
<feature type="glycosylation site" description="N-linked (GlcNAc...) asparagine" evidence="7">
    <location>
        <position position="407"/>
    </location>
</feature>
<feature type="glycosylation site" description="N-linked (GlcNAc...) asparagine" evidence="7">
    <location>
        <position position="414"/>
    </location>
</feature>
<feature type="disulfide bond" evidence="1">
    <location>
        <begin position="84"/>
        <end position="331"/>
    </location>
</feature>
<feature type="disulfide bond" evidence="1">
    <location>
        <begin position="740"/>
        <end position="795"/>
    </location>
</feature>
<reference key="1">
    <citation type="journal article" date="2006" name="Mol. Vis.">
        <title>Expression and sequences of genes encoding glutamate receptors and transporters in primate retina determined using 3'-end amplification polymerase chain reaction.</title>
        <authorList>
            <person name="Hanna M.C."/>
            <person name="Calkins D.J."/>
        </authorList>
    </citation>
    <scope>NUCLEOTIDE SEQUENCE [MRNA]</scope>
    <source>
        <tissue>Retina</tissue>
    </source>
</reference>
<proteinExistence type="evidence at transcript level"/>
<accession>Q38PU5</accession>
<comment type="function">
    <text evidence="2 4 5">Ionotropic glutamate receptor that functions as a ligand-gated cation channel, gated by L-glutamate and glutamatergic agonists such as alpha-amino-3-hydroxy-5-methyl-4-isoxazolepropionic acid (AMPA), quisqualic acid, and kainic acid (By similarity). L-glutamate acts as an excitatory neurotransmitter at many synapses in the central nervous system and plays an important role in fast excitatory synaptic transmission (By similarity). Binding of the excitatory neurotransmitter L-glutamate induces a conformation change, leading to the opening of the cation channel, and thereby converts the chemical signal to an electrical impulse upon entry of monovalent and divalent cations such as sodium and calcium. The receptor then desensitizes rapidly and enters a transient inactive state, characterized by the presence of bound agonist (By similarity). In the presence of CACNG8, shows resensitization which is characterized by a delayed accumulation of current flux upon continued application of L-glutamate (By similarity).</text>
</comment>
<comment type="catalytic activity">
    <reaction evidence="2">
        <text>Ca(2+)(in) = Ca(2+)(out)</text>
        <dbReference type="Rhea" id="RHEA:29671"/>
        <dbReference type="ChEBI" id="CHEBI:29108"/>
    </reaction>
</comment>
<comment type="catalytic activity">
    <reaction evidence="2">
        <text>Na(+)(in) = Na(+)(out)</text>
        <dbReference type="Rhea" id="RHEA:34963"/>
        <dbReference type="ChEBI" id="CHEBI:29101"/>
    </reaction>
</comment>
<comment type="catalytic activity">
    <reaction evidence="2">
        <text>Mg(2+)(in) = Mg(2+)(out)</text>
        <dbReference type="Rhea" id="RHEA:29827"/>
        <dbReference type="ChEBI" id="CHEBI:18420"/>
    </reaction>
</comment>
<comment type="subunit">
    <text evidence="2 6">Homotetramer or heterotetramer of pore-forming glutamate receptor subunits. Tetramers may be formed by the dimerization of dimers. Interacts with EPB41L1 via its C-terminus. Isoform 3 interacts with PICK1. Found in a complex with GRIA1, GRIA2, GRIA3, CNIH2, CNIH3, CACNG2, CACNG3, CACNG4, CACNG5, CACNG7 and CACNG8. Interacts with CACNG5 and PRKCG (By similarity). Found in a complex with GRIA1, GRIA2, GRIA3, DLG4, CACNG8 and CNIH2 (By similarity).</text>
</comment>
<comment type="subcellular location">
    <subcellularLocation>
        <location evidence="2">Cell membrane</location>
        <topology evidence="2">Multi-pass membrane protein</topology>
    </subcellularLocation>
    <subcellularLocation>
        <location evidence="2">Postsynaptic cell membrane</location>
        <topology evidence="2">Multi-pass membrane protein</topology>
    </subcellularLocation>
    <subcellularLocation>
        <location evidence="2">Cell projection</location>
        <location evidence="2">Dendrite</location>
    </subcellularLocation>
    <subcellularLocation>
        <location evidence="4">Postsynaptic cell membrane</location>
        <topology evidence="4">Multi-pass membrane protein</topology>
    </subcellularLocation>
</comment>
<comment type="domain">
    <text evidence="4">The M4 transmembrane segment mediates tetramerization and is required for cell surface expression.</text>
</comment>
<comment type="PTM">
    <text evidence="3">Palmitoylated. Depalmitoylated upon L-glutamate stimulation. ZDHHC3/GODZ specifically palmitoylates Cys-611, which leads to Golgi retention and decreased cell surface expression. In contrast, Cys-837 palmitoylation does not affect cell surface expression but regulates stimulation-dependent endocytosis.</text>
</comment>
<comment type="PTM">
    <text evidence="2">Phosphorylated at Ser-862 by PRKCG; phosphorylation increases plasma membrane-associated GRI4 expression.</text>
</comment>
<comment type="miscellaneous">
    <text evidence="2">The postsynaptic actions of L-glutamate are mediated by a variety of receptors that are named according to their selective agonists. This receptor binds AMPA (quisqualate) &gt; L-glutamate &gt; kainate.</text>
</comment>
<comment type="similarity">
    <text evidence="8">Belongs to the glutamate-gated ion channel (TC 1.A.10.1) family. GRIA4 subfamily.</text>
</comment>
<sequence>MRIISRQIVLLFSGFWGLAMGAFPSSVQIGGLFIRNTDQEYTAFRLAIFLHNTSPNASEAPFNLVPHVDNIETANSFAVTNAFCSQYSRGVFAIFGLYDKRSVHTLTSFCSALHISLITPSFPTEGESQFVLQLRPSLRGALLSLLDHYEWNCFVFLYDTDRGYSILQAIMEKAGQNGWHVSAICVENFNDVSYRQLLEELDRRQEKKFVIDCEIERLQNILEQIVSVGKHVKGYHYIIANLGFKDISLERFIHGGANVTGFQLVDFNTPMVIKLMDRWKKLDQREYPGSETPPKYTSALTYDGVLVMAETFRSLRRQKIDISRRGNAGDCLANPAAPWGQGIDMERTLKQVRIQGLTGNVQFDHYGRRVNYTMDVFELKSTGPRKVGYWNDMDKLVLIQDVPTLGNDTAAIENRTVVVTTIMESPYVMYKKNHEMFEGNDKYEGYCVDLASEIAKHIGIKYKIAIVPDGKYGARDADTKIWNGMVGELVYGKAEIAIAPLTITLVREEVIDFSKPFMSLGISIMIKKPQKSKPGVFSFLDPLAYEIWMCIVFAYIGVSVVLFLVSRFSPYEWHTEEPEDGKEGPSDQPPNEFGIFNSLWFSLGAFMQQGCDISPRSLSGRIVGGVWWFFTLIIISSYTANLAAFLTVERMVSPIESAEDLAKQTEIAYGTLDSGSTKEFFRRSKIAVYEKMWTYMRSAEPSVFTRTTAEGVARVRKSKGKFAFLLESTMNEYIEQRKPCDTMKVGGNLDSKGYGVATPKGSSLGNAVNLAVLKLNEPGLLDKLKNKWWYDKGECGSGGGDSKDKTSALSLSNVAGVFYILVGGLGLAMLVALIEFCYKSRAEAKRMKLTFSEAIRNKARLSITGSVGENGRVLTPDCPKAVHAGTAIRQSSGLAVIASDLP</sequence>
<organism>
    <name type="scientific">Macaca fascicularis</name>
    <name type="common">Crab-eating macaque</name>
    <name type="synonym">Cynomolgus monkey</name>
    <dbReference type="NCBI Taxonomy" id="9541"/>
    <lineage>
        <taxon>Eukaryota</taxon>
        <taxon>Metazoa</taxon>
        <taxon>Chordata</taxon>
        <taxon>Craniata</taxon>
        <taxon>Vertebrata</taxon>
        <taxon>Euteleostomi</taxon>
        <taxon>Mammalia</taxon>
        <taxon>Eutheria</taxon>
        <taxon>Euarchontoglires</taxon>
        <taxon>Primates</taxon>
        <taxon>Haplorrhini</taxon>
        <taxon>Catarrhini</taxon>
        <taxon>Cercopithecidae</taxon>
        <taxon>Cercopithecinae</taxon>
        <taxon>Macaca</taxon>
    </lineage>
</organism>
<protein>
    <recommendedName>
        <fullName evidence="5">Glutamate receptor 4</fullName>
        <shortName>GluR-4</shortName>
        <shortName>GluR4</shortName>
    </recommendedName>
    <alternativeName>
        <fullName>AMPA-selective glutamate receptor 4</fullName>
    </alternativeName>
    <alternativeName>
        <fullName>GluR-D</fullName>
    </alternativeName>
    <alternativeName>
        <fullName>Glutamate receptor ionotropic, AMPA 4</fullName>
        <shortName>GluA4</shortName>
    </alternativeName>
</protein>
<name>GRIA4_MACFA</name>